<name>RS5_ZYMMO</name>
<reference key="1">
    <citation type="journal article" date="2005" name="Nat. Biotechnol.">
        <title>The genome sequence of the ethanologenic bacterium Zymomonas mobilis ZM4.</title>
        <authorList>
            <person name="Seo J.-S."/>
            <person name="Chong H."/>
            <person name="Park H.S."/>
            <person name="Yoon K.-O."/>
            <person name="Jung C."/>
            <person name="Kim J.J."/>
            <person name="Hong J.H."/>
            <person name="Kim H."/>
            <person name="Kim J.-H."/>
            <person name="Kil J.-I."/>
            <person name="Park C.J."/>
            <person name="Oh H.-M."/>
            <person name="Lee J.-S."/>
            <person name="Jin S.-J."/>
            <person name="Um H.-W."/>
            <person name="Lee H.-J."/>
            <person name="Oh S.-J."/>
            <person name="Kim J.Y."/>
            <person name="Kang H.L."/>
            <person name="Lee S.Y."/>
            <person name="Lee K.J."/>
            <person name="Kang H.S."/>
        </authorList>
    </citation>
    <scope>NUCLEOTIDE SEQUENCE [LARGE SCALE GENOMIC DNA]</scope>
    <source>
        <strain>ATCC 31821 / ZM4 / CP4</strain>
    </source>
</reference>
<keyword id="KW-1185">Reference proteome</keyword>
<keyword id="KW-0687">Ribonucleoprotein</keyword>
<keyword id="KW-0689">Ribosomal protein</keyword>
<keyword id="KW-0694">RNA-binding</keyword>
<keyword id="KW-0699">rRNA-binding</keyword>
<feature type="chain" id="PRO_0000131642" description="Small ribosomal subunit protein uS5">
    <location>
        <begin position="1"/>
        <end position="233"/>
    </location>
</feature>
<feature type="domain" description="S5 DRBM" evidence="1">
    <location>
        <begin position="59"/>
        <end position="122"/>
    </location>
</feature>
<feature type="region of interest" description="Disordered" evidence="2">
    <location>
        <begin position="1"/>
        <end position="54"/>
    </location>
</feature>
<feature type="compositionally biased region" description="Basic and acidic residues" evidence="2">
    <location>
        <begin position="1"/>
        <end position="12"/>
    </location>
</feature>
<feature type="compositionally biased region" description="Basic and acidic residues" evidence="2">
    <location>
        <begin position="39"/>
        <end position="54"/>
    </location>
</feature>
<gene>
    <name evidence="1" type="primary">rpsE</name>
    <name type="ordered locus">ZMO0533</name>
</gene>
<dbReference type="EMBL" id="AE008692">
    <property type="protein sequence ID" value="AAV89157.1"/>
    <property type="molecule type" value="Genomic_DNA"/>
</dbReference>
<dbReference type="RefSeq" id="WP_011240440.1">
    <property type="nucleotide sequence ID" value="NZ_CP035711.1"/>
</dbReference>
<dbReference type="SMR" id="Q5NQ48"/>
<dbReference type="STRING" id="264203.ZMO0533"/>
<dbReference type="GeneID" id="79904275"/>
<dbReference type="KEGG" id="zmo:ZMO0533"/>
<dbReference type="eggNOG" id="COG0098">
    <property type="taxonomic scope" value="Bacteria"/>
</dbReference>
<dbReference type="HOGENOM" id="CLU_065898_2_1_5"/>
<dbReference type="Proteomes" id="UP000001173">
    <property type="component" value="Chromosome"/>
</dbReference>
<dbReference type="GO" id="GO:0015935">
    <property type="term" value="C:small ribosomal subunit"/>
    <property type="evidence" value="ECO:0007669"/>
    <property type="project" value="InterPro"/>
</dbReference>
<dbReference type="GO" id="GO:0019843">
    <property type="term" value="F:rRNA binding"/>
    <property type="evidence" value="ECO:0007669"/>
    <property type="project" value="UniProtKB-UniRule"/>
</dbReference>
<dbReference type="GO" id="GO:0003735">
    <property type="term" value="F:structural constituent of ribosome"/>
    <property type="evidence" value="ECO:0007669"/>
    <property type="project" value="InterPro"/>
</dbReference>
<dbReference type="GO" id="GO:0006412">
    <property type="term" value="P:translation"/>
    <property type="evidence" value="ECO:0007669"/>
    <property type="project" value="UniProtKB-UniRule"/>
</dbReference>
<dbReference type="FunFam" id="3.30.160.20:FF:000001">
    <property type="entry name" value="30S ribosomal protein S5"/>
    <property type="match status" value="1"/>
</dbReference>
<dbReference type="FunFam" id="3.30.230.10:FF:000002">
    <property type="entry name" value="30S ribosomal protein S5"/>
    <property type="match status" value="1"/>
</dbReference>
<dbReference type="Gene3D" id="3.30.160.20">
    <property type="match status" value="1"/>
</dbReference>
<dbReference type="Gene3D" id="3.30.230.10">
    <property type="match status" value="1"/>
</dbReference>
<dbReference type="HAMAP" id="MF_01307_B">
    <property type="entry name" value="Ribosomal_uS5_B"/>
    <property type="match status" value="1"/>
</dbReference>
<dbReference type="InterPro" id="IPR020568">
    <property type="entry name" value="Ribosomal_Su5_D2-typ_SF"/>
</dbReference>
<dbReference type="InterPro" id="IPR000851">
    <property type="entry name" value="Ribosomal_uS5"/>
</dbReference>
<dbReference type="InterPro" id="IPR005712">
    <property type="entry name" value="Ribosomal_uS5_bac-type"/>
</dbReference>
<dbReference type="InterPro" id="IPR005324">
    <property type="entry name" value="Ribosomal_uS5_C"/>
</dbReference>
<dbReference type="InterPro" id="IPR013810">
    <property type="entry name" value="Ribosomal_uS5_N"/>
</dbReference>
<dbReference type="InterPro" id="IPR018192">
    <property type="entry name" value="Ribosomal_uS5_N_CS"/>
</dbReference>
<dbReference type="InterPro" id="IPR014721">
    <property type="entry name" value="Ribsml_uS5_D2-typ_fold_subgr"/>
</dbReference>
<dbReference type="NCBIfam" id="TIGR01021">
    <property type="entry name" value="rpsE_bact"/>
    <property type="match status" value="1"/>
</dbReference>
<dbReference type="PANTHER" id="PTHR48277">
    <property type="entry name" value="MITOCHONDRIAL RIBOSOMAL PROTEIN S5"/>
    <property type="match status" value="1"/>
</dbReference>
<dbReference type="PANTHER" id="PTHR48277:SF1">
    <property type="entry name" value="MITOCHONDRIAL RIBOSOMAL PROTEIN S5"/>
    <property type="match status" value="1"/>
</dbReference>
<dbReference type="Pfam" id="PF00333">
    <property type="entry name" value="Ribosomal_S5"/>
    <property type="match status" value="1"/>
</dbReference>
<dbReference type="Pfam" id="PF03719">
    <property type="entry name" value="Ribosomal_S5_C"/>
    <property type="match status" value="1"/>
</dbReference>
<dbReference type="SUPFAM" id="SSF54768">
    <property type="entry name" value="dsRNA-binding domain-like"/>
    <property type="match status" value="1"/>
</dbReference>
<dbReference type="SUPFAM" id="SSF54211">
    <property type="entry name" value="Ribosomal protein S5 domain 2-like"/>
    <property type="match status" value="1"/>
</dbReference>
<dbReference type="PROSITE" id="PS00585">
    <property type="entry name" value="RIBOSOMAL_S5"/>
    <property type="match status" value="1"/>
</dbReference>
<dbReference type="PROSITE" id="PS50881">
    <property type="entry name" value="S5_DSRBD"/>
    <property type="match status" value="1"/>
</dbReference>
<evidence type="ECO:0000255" key="1">
    <source>
        <dbReference type="HAMAP-Rule" id="MF_01307"/>
    </source>
</evidence>
<evidence type="ECO:0000256" key="2">
    <source>
        <dbReference type="SAM" id="MobiDB-lite"/>
    </source>
</evidence>
<evidence type="ECO:0000305" key="3"/>
<comment type="function">
    <text evidence="1">With S4 and S12 plays an important role in translational accuracy.</text>
</comment>
<comment type="function">
    <text evidence="1">Located at the back of the 30S subunit body where it stabilizes the conformation of the head with respect to the body.</text>
</comment>
<comment type="subunit">
    <text evidence="1">Part of the 30S ribosomal subunit. Contacts proteins S4 and S8.</text>
</comment>
<comment type="domain">
    <text>The N-terminal domain interacts with the head of the 30S subunit; the C-terminal domain interacts with the body and contacts protein S4. The interaction surface between S4 and S5 is involved in control of translational fidelity.</text>
</comment>
<comment type="similarity">
    <text evidence="1">Belongs to the universal ribosomal protein uS5 family.</text>
</comment>
<protein>
    <recommendedName>
        <fullName evidence="1">Small ribosomal subunit protein uS5</fullName>
    </recommendedName>
    <alternativeName>
        <fullName evidence="3">30S ribosomal protein S5</fullName>
    </alternativeName>
</protein>
<accession>Q5NQ48</accession>
<proteinExistence type="inferred from homology"/>
<organism>
    <name type="scientific">Zymomonas mobilis subsp. mobilis (strain ATCC 31821 / ZM4 / CP4)</name>
    <dbReference type="NCBI Taxonomy" id="264203"/>
    <lineage>
        <taxon>Bacteria</taxon>
        <taxon>Pseudomonadati</taxon>
        <taxon>Pseudomonadota</taxon>
        <taxon>Alphaproteobacteria</taxon>
        <taxon>Sphingomonadales</taxon>
        <taxon>Zymomonadaceae</taxon>
        <taxon>Zymomonas</taxon>
    </lineage>
</organism>
<sequence length="233" mass="24623">MANESEIQKTENAEVANAANGTNPNNERRGRGGRGRGGRGRDGRGRRDDRRNEEAGEELIEKLVHINRVSKTVKGGKRFGFAALVVVGDGKGRVGFGHGKAREVPEAISKATAAAKKTMIRVPLREGRTLHHDGRGRFGAGLVYLRSAPSGTGIIAGGPMRAIFESLGVADVVTKSVGTSNPYNMIRATFEALNDQKSPKAVAQRRGKRIADLFGRGGASAAKAEAEAAAVVE</sequence>